<proteinExistence type="inferred from homology"/>
<reference key="1">
    <citation type="submission" date="2005-09" db="EMBL/GenBank/DDBJ databases">
        <title>Annotation of the Aspergillus terreus NIH2624 genome.</title>
        <authorList>
            <person name="Birren B.W."/>
            <person name="Lander E.S."/>
            <person name="Galagan J.E."/>
            <person name="Nusbaum C."/>
            <person name="Devon K."/>
            <person name="Henn M."/>
            <person name="Ma L.-J."/>
            <person name="Jaffe D.B."/>
            <person name="Butler J."/>
            <person name="Alvarez P."/>
            <person name="Gnerre S."/>
            <person name="Grabherr M."/>
            <person name="Kleber M."/>
            <person name="Mauceli E.W."/>
            <person name="Brockman W."/>
            <person name="Rounsley S."/>
            <person name="Young S.K."/>
            <person name="LaButti K."/>
            <person name="Pushparaj V."/>
            <person name="DeCaprio D."/>
            <person name="Crawford M."/>
            <person name="Koehrsen M."/>
            <person name="Engels R."/>
            <person name="Montgomery P."/>
            <person name="Pearson M."/>
            <person name="Howarth C."/>
            <person name="Larson L."/>
            <person name="Luoma S."/>
            <person name="White J."/>
            <person name="Alvarado L."/>
            <person name="Kodira C.D."/>
            <person name="Zeng Q."/>
            <person name="Oleary S."/>
            <person name="Yandava C."/>
            <person name="Denning D.W."/>
            <person name="Nierman W.C."/>
            <person name="Milne T."/>
            <person name="Madden K."/>
        </authorList>
    </citation>
    <scope>NUCLEOTIDE SEQUENCE [LARGE SCALE GENOMIC DNA]</scope>
    <source>
        <strain>NIH 2624 / FGSC A1156</strain>
    </source>
</reference>
<sequence length="1117" mass="123742">MPLSSSQSSPPSSQNLKRKQQTISSFFTKKPQSTKPEESHGADEKQRTNGAEEVGNENRAPPHTADAAEEDDDDIVAPAPKRARTNAHRQKDTDQTSDGPPRIAEPPKSSQRTELAKFASSPAGAAEPEEMDEEEAQERKKEREKLHKQFVRRLGGPDCLIGINRHVSGEADPALEEAAEADEDEEAVQAPPAKGKAAAKKGGGKLTPMERQIIDMKRKHMDKILAVQVGYKFRFFGEDARVAAKELSIVCIPGKFRFDEHPSEAHLDRFASASIPVHKLHVHVKRLITAGHKVGIVRQIETAALKAAGDNRNAPFVRKLTNVYTKGTYIDDMEGLEGPTAGAGTTAATGYMLCITETNAKGWGNDEKVHVGIVAVQPATGDIVFDDFEDGFMRSEIETRLLHLAPCELLIVGDLSKASDKLVQHLAGSKMNVFGDKVRVERTTKSKTAAAEAHSHVSSFYADKVKSANASDDTQASNLLQKVLNLPEQVSICLSSMIKHMTEYGLEHVFDLTKYFQHFSSRSHMLLNGNTLMSLEIYQNQTDHSSRGSLFWTLDRTQTRFGQRLLRKWVGRPLLDKSKLEERVNAIEELKSMEKVAMVERLKGVLGKAKCDLEKILIRIYYGRCTRPELLTGLQTLQMIAQEFGDVKSPEDSGFTTPILNEAIASLPTILEDVLSFLNKINLHAARNDDKYEFFREAEETEDISEHKLGIASVEHELREYQSVAGKILGRSKIQYVTVAGIDYLIEVENNSSYLKRVPASWVKISGTKKLSRFHSPEVIKLLRQRDQHKEALAAACDHAYASLLAEIAANYQPFRDCVQSLATIDCLLSLSSIANQPGYVKPEYADNTCIHVEQGRHPMVEQLLLDSYVPNDINLDSEETRALLVTGPNMGGKSSYVRQIALIAIMGQVGSYVPAQSAKLGMLDAVFTRMGAFDNMLAGESTFMVELSETADILKQATPRSLVILDELGRGTSTHDGVAIAQAVLDYMVRSLRSLTLFITHYQHLSSMVHSFPNHELRNVHMRFTESGSGQDEEITFLYEVGEGVAHRSYGLNVARLANLPVPLIEVAKQKSAELEQKIRRRRLAGLMSTVENIMSDSAKNDEGLITRLISSAEQL</sequence>
<evidence type="ECO:0000250" key="1"/>
<evidence type="ECO:0000255" key="2"/>
<evidence type="ECO:0000256" key="3">
    <source>
        <dbReference type="SAM" id="MobiDB-lite"/>
    </source>
</evidence>
<evidence type="ECO:0000305" key="4"/>
<dbReference type="EMBL" id="CH476599">
    <property type="protein sequence ID" value="EAU34782.1"/>
    <property type="molecule type" value="Genomic_DNA"/>
</dbReference>
<dbReference type="RefSeq" id="XP_001213513.1">
    <property type="nucleotide sequence ID" value="XM_001213513.1"/>
</dbReference>
<dbReference type="SMR" id="Q0CPP9"/>
<dbReference type="STRING" id="341663.Q0CPP9"/>
<dbReference type="EnsemblFungi" id="EAU34782">
    <property type="protein sequence ID" value="EAU34782"/>
    <property type="gene ID" value="ATEG_04335"/>
</dbReference>
<dbReference type="GeneID" id="4319891"/>
<dbReference type="VEuPathDB" id="FungiDB:ATEG_04335"/>
<dbReference type="eggNOG" id="KOG0218">
    <property type="taxonomic scope" value="Eukaryota"/>
</dbReference>
<dbReference type="HOGENOM" id="CLU_002472_0_2_1"/>
<dbReference type="OMA" id="INMHAAR"/>
<dbReference type="OrthoDB" id="121051at2759"/>
<dbReference type="Proteomes" id="UP000007963">
    <property type="component" value="Unassembled WGS sequence"/>
</dbReference>
<dbReference type="GO" id="GO:0005634">
    <property type="term" value="C:nucleus"/>
    <property type="evidence" value="ECO:0007669"/>
    <property type="project" value="UniProtKB-SubCell"/>
</dbReference>
<dbReference type="GO" id="GO:0005524">
    <property type="term" value="F:ATP binding"/>
    <property type="evidence" value="ECO:0007669"/>
    <property type="project" value="UniProtKB-KW"/>
</dbReference>
<dbReference type="GO" id="GO:0140664">
    <property type="term" value="F:ATP-dependent DNA damage sensor activity"/>
    <property type="evidence" value="ECO:0007669"/>
    <property type="project" value="InterPro"/>
</dbReference>
<dbReference type="GO" id="GO:0030983">
    <property type="term" value="F:mismatched DNA binding"/>
    <property type="evidence" value="ECO:0007669"/>
    <property type="project" value="InterPro"/>
</dbReference>
<dbReference type="GO" id="GO:0006298">
    <property type="term" value="P:mismatch repair"/>
    <property type="evidence" value="ECO:0007669"/>
    <property type="project" value="InterPro"/>
</dbReference>
<dbReference type="GO" id="GO:0006312">
    <property type="term" value="P:mitotic recombination"/>
    <property type="evidence" value="ECO:0007669"/>
    <property type="project" value="TreeGrafter"/>
</dbReference>
<dbReference type="FunFam" id="3.30.420.110:FF:000008">
    <property type="entry name" value="DNA mismatch repair protein"/>
    <property type="match status" value="1"/>
</dbReference>
<dbReference type="FunFam" id="3.40.1170.10:FF:000006">
    <property type="entry name" value="DNA mismatch repair protein"/>
    <property type="match status" value="1"/>
</dbReference>
<dbReference type="FunFam" id="1.10.1420.10:FF:000004">
    <property type="entry name" value="DNA mismatch repair protein Msh3"/>
    <property type="match status" value="1"/>
</dbReference>
<dbReference type="FunFam" id="3.40.50.300:FF:001909">
    <property type="entry name" value="DNA mismatch repair protein msh3"/>
    <property type="match status" value="1"/>
</dbReference>
<dbReference type="Gene3D" id="1.10.1420.10">
    <property type="match status" value="2"/>
</dbReference>
<dbReference type="Gene3D" id="3.40.1170.10">
    <property type="entry name" value="DNA repair protein MutS, domain I"/>
    <property type="match status" value="1"/>
</dbReference>
<dbReference type="Gene3D" id="3.30.420.110">
    <property type="entry name" value="MutS, connector domain"/>
    <property type="match status" value="1"/>
</dbReference>
<dbReference type="Gene3D" id="3.40.50.300">
    <property type="entry name" value="P-loop containing nucleotide triphosphate hydrolases"/>
    <property type="match status" value="1"/>
</dbReference>
<dbReference type="InterPro" id="IPR007695">
    <property type="entry name" value="DNA_mismatch_repair_MutS-lik_N"/>
</dbReference>
<dbReference type="InterPro" id="IPR017261">
    <property type="entry name" value="DNA_mismatch_repair_MutS/MSH"/>
</dbReference>
<dbReference type="InterPro" id="IPR000432">
    <property type="entry name" value="DNA_mismatch_repair_MutS_C"/>
</dbReference>
<dbReference type="InterPro" id="IPR007696">
    <property type="entry name" value="DNA_mismatch_repair_MutS_core"/>
</dbReference>
<dbReference type="InterPro" id="IPR016151">
    <property type="entry name" value="DNA_mismatch_repair_MutS_N"/>
</dbReference>
<dbReference type="InterPro" id="IPR036187">
    <property type="entry name" value="DNA_mismatch_repair_MutS_sf"/>
</dbReference>
<dbReference type="InterPro" id="IPR007860">
    <property type="entry name" value="DNA_mmatch_repair_MutS_con_dom"/>
</dbReference>
<dbReference type="InterPro" id="IPR045076">
    <property type="entry name" value="MutS"/>
</dbReference>
<dbReference type="InterPro" id="IPR036678">
    <property type="entry name" value="MutS_con_dom_sf"/>
</dbReference>
<dbReference type="InterPro" id="IPR027417">
    <property type="entry name" value="P-loop_NTPase"/>
</dbReference>
<dbReference type="NCBIfam" id="NF003810">
    <property type="entry name" value="PRK05399.1"/>
    <property type="match status" value="1"/>
</dbReference>
<dbReference type="PANTHER" id="PTHR11361:SF122">
    <property type="entry name" value="DNA MISMATCH REPAIR PROTEIN MSH3"/>
    <property type="match status" value="1"/>
</dbReference>
<dbReference type="PANTHER" id="PTHR11361">
    <property type="entry name" value="DNA MISMATCH REPAIR PROTEIN MUTS FAMILY MEMBER"/>
    <property type="match status" value="1"/>
</dbReference>
<dbReference type="Pfam" id="PF01624">
    <property type="entry name" value="MutS_I"/>
    <property type="match status" value="1"/>
</dbReference>
<dbReference type="Pfam" id="PF05188">
    <property type="entry name" value="MutS_II"/>
    <property type="match status" value="1"/>
</dbReference>
<dbReference type="Pfam" id="PF05192">
    <property type="entry name" value="MutS_III"/>
    <property type="match status" value="1"/>
</dbReference>
<dbReference type="Pfam" id="PF00488">
    <property type="entry name" value="MutS_V"/>
    <property type="match status" value="1"/>
</dbReference>
<dbReference type="PIRSF" id="PIRSF037677">
    <property type="entry name" value="DNA_mis_repair_Msh6"/>
    <property type="match status" value="1"/>
</dbReference>
<dbReference type="SMART" id="SM00534">
    <property type="entry name" value="MUTSac"/>
    <property type="match status" value="1"/>
</dbReference>
<dbReference type="SMART" id="SM00533">
    <property type="entry name" value="MUTSd"/>
    <property type="match status" value="1"/>
</dbReference>
<dbReference type="SUPFAM" id="SSF55271">
    <property type="entry name" value="DNA repair protein MutS, domain I"/>
    <property type="match status" value="1"/>
</dbReference>
<dbReference type="SUPFAM" id="SSF48334">
    <property type="entry name" value="DNA repair protein MutS, domain III"/>
    <property type="match status" value="1"/>
</dbReference>
<dbReference type="SUPFAM" id="SSF52540">
    <property type="entry name" value="P-loop containing nucleoside triphosphate hydrolases"/>
    <property type="match status" value="1"/>
</dbReference>
<dbReference type="PROSITE" id="PS00486">
    <property type="entry name" value="DNA_MISMATCH_REPAIR_2"/>
    <property type="match status" value="1"/>
</dbReference>
<protein>
    <recommendedName>
        <fullName>DNA mismatch repair protein msh3</fullName>
    </recommendedName>
    <alternativeName>
        <fullName>MutS protein homolog 3</fullName>
    </alternativeName>
</protein>
<organism>
    <name type="scientific">Aspergillus terreus (strain NIH 2624 / FGSC A1156)</name>
    <dbReference type="NCBI Taxonomy" id="341663"/>
    <lineage>
        <taxon>Eukaryota</taxon>
        <taxon>Fungi</taxon>
        <taxon>Dikarya</taxon>
        <taxon>Ascomycota</taxon>
        <taxon>Pezizomycotina</taxon>
        <taxon>Eurotiomycetes</taxon>
        <taxon>Eurotiomycetidae</taxon>
        <taxon>Eurotiales</taxon>
        <taxon>Aspergillaceae</taxon>
        <taxon>Aspergillus</taxon>
        <taxon>Aspergillus subgen. Circumdati</taxon>
    </lineage>
</organism>
<keyword id="KW-0067">ATP-binding</keyword>
<keyword id="KW-0227">DNA damage</keyword>
<keyword id="KW-0234">DNA repair</keyword>
<keyword id="KW-0238">DNA-binding</keyword>
<keyword id="KW-0547">Nucleotide-binding</keyword>
<keyword id="KW-0539">Nucleus</keyword>
<keyword id="KW-1185">Reference proteome</keyword>
<feature type="chain" id="PRO_0000338513" description="DNA mismatch repair protein msh3">
    <location>
        <begin position="1"/>
        <end position="1117"/>
    </location>
</feature>
<feature type="region of interest" description="Disordered" evidence="3">
    <location>
        <begin position="1"/>
        <end position="143"/>
    </location>
</feature>
<feature type="region of interest" description="Disordered" evidence="3">
    <location>
        <begin position="172"/>
        <end position="205"/>
    </location>
</feature>
<feature type="region of interest" description="Mispair-binding domain" evidence="1">
    <location>
        <begin position="200"/>
        <end position="327"/>
    </location>
</feature>
<feature type="compositionally biased region" description="Low complexity" evidence="3">
    <location>
        <begin position="1"/>
        <end position="14"/>
    </location>
</feature>
<feature type="compositionally biased region" description="Polar residues" evidence="3">
    <location>
        <begin position="21"/>
        <end position="34"/>
    </location>
</feature>
<feature type="compositionally biased region" description="Basic and acidic residues" evidence="3">
    <location>
        <begin position="35"/>
        <end position="47"/>
    </location>
</feature>
<feature type="compositionally biased region" description="Acidic residues" evidence="3">
    <location>
        <begin position="127"/>
        <end position="136"/>
    </location>
</feature>
<feature type="compositionally biased region" description="Acidic residues" evidence="3">
    <location>
        <begin position="173"/>
        <end position="187"/>
    </location>
</feature>
<feature type="binding site" evidence="2">
    <location>
        <begin position="888"/>
        <end position="895"/>
    </location>
    <ligand>
        <name>ATP</name>
        <dbReference type="ChEBI" id="CHEBI:30616"/>
    </ligand>
</feature>
<gene>
    <name type="primary">msh3</name>
    <name type="ORF">ATEG_04335</name>
</gene>
<name>MSH3_ASPTN</name>
<comment type="function">
    <text evidence="1">Component of the post-replicative DNA mismatch repair system (MMR). Heterodimerizes with msh2 to form MutS beta, which binds to DNA mismatches thereby initiating DNA repair. Msh3 provides substrate-binding and substrate specificity to the complex. When bound, the MutS beta heterodimer bends the DNA helix and shields approximately 20 base pairs. Acts mainly to repair insertion-deletion loops (IDLs) from 2 to 13 nucleotides in size, but can also repair base-base and single insertion-deletion mismatches that occur during replication. After mismatch binding, forms a ternary complex with the MutL alpha heterodimer, which is thought to be responsible for directing the downstream MMR events, including strand discrimination, excision, and resynthesis. ATP binding and hydrolysis play a pivotal role in mismatch repair functions (By similarity).</text>
</comment>
<comment type="subunit">
    <text evidence="1">Heterodimer consisting of msh2-msh3 (MutS beta). Forms a ternary complex with MutL alpha (mlh1-pms1) (By similarity).</text>
</comment>
<comment type="subcellular location">
    <subcellularLocation>
        <location evidence="1">Nucleus</location>
    </subcellularLocation>
</comment>
<comment type="similarity">
    <text evidence="4">Belongs to the DNA mismatch repair MutS family. MSH3 subfamily.</text>
</comment>
<accession>Q0CPP9</accession>